<protein>
    <recommendedName>
        <fullName evidence="5">Calcium uniporter protein, mitochondrial</fullName>
        <shortName evidence="4">MaMCU</shortName>
    </recommendedName>
</protein>
<dbReference type="EMBL" id="GL698477">
    <property type="protein sequence ID" value="EFY92151.1"/>
    <property type="molecule type" value="Genomic_DNA"/>
</dbReference>
<dbReference type="RefSeq" id="XP_007808092.1">
    <property type="nucleotide sequence ID" value="XM_007809901.1"/>
</dbReference>
<dbReference type="PDB" id="6C5R">
    <property type="method" value="X-ray"/>
    <property type="resolution" value="3.10 A"/>
    <property type="chains" value="A/B/C/D/E/F/G/H=99-426"/>
</dbReference>
<dbReference type="PDB" id="6C5W">
    <property type="method" value="X-ray"/>
    <property type="resolution" value="3.10 A"/>
    <property type="chains" value="A/B=99-426"/>
</dbReference>
<dbReference type="PDBsum" id="6C5R"/>
<dbReference type="PDBsum" id="6C5W"/>
<dbReference type="SMR" id="E9DVV4"/>
<dbReference type="STRING" id="655827.E9DVV4"/>
<dbReference type="ABCD" id="E9DVV4">
    <property type="antibodies" value="1 sequenced antibody"/>
</dbReference>
<dbReference type="GeneID" id="19246063"/>
<dbReference type="KEGG" id="maw:19246063"/>
<dbReference type="eggNOG" id="KOG2966">
    <property type="taxonomic scope" value="Eukaryota"/>
</dbReference>
<dbReference type="HOGENOM" id="CLU_035826_1_1_1"/>
<dbReference type="InParanoid" id="E9DVV4"/>
<dbReference type="OMA" id="IKHECDA"/>
<dbReference type="OrthoDB" id="278338at2759"/>
<dbReference type="Proteomes" id="UP000002499">
    <property type="component" value="Unassembled WGS sequence"/>
</dbReference>
<dbReference type="GO" id="GO:0005743">
    <property type="term" value="C:mitochondrial inner membrane"/>
    <property type="evidence" value="ECO:0000314"/>
    <property type="project" value="UniProtKB"/>
</dbReference>
<dbReference type="GO" id="GO:1990246">
    <property type="term" value="C:uniplex complex"/>
    <property type="evidence" value="ECO:0007669"/>
    <property type="project" value="TreeGrafter"/>
</dbReference>
<dbReference type="GO" id="GO:0005262">
    <property type="term" value="F:calcium channel activity"/>
    <property type="evidence" value="ECO:0000314"/>
    <property type="project" value="UniProtKB"/>
</dbReference>
<dbReference type="GO" id="GO:0042802">
    <property type="term" value="F:identical protein binding"/>
    <property type="evidence" value="ECO:0000353"/>
    <property type="project" value="IntAct"/>
</dbReference>
<dbReference type="GO" id="GO:0046872">
    <property type="term" value="F:metal ion binding"/>
    <property type="evidence" value="ECO:0007669"/>
    <property type="project" value="UniProtKB-KW"/>
</dbReference>
<dbReference type="GO" id="GO:0015292">
    <property type="term" value="F:uniporter activity"/>
    <property type="evidence" value="ECO:0007669"/>
    <property type="project" value="TreeGrafter"/>
</dbReference>
<dbReference type="GO" id="GO:0036444">
    <property type="term" value="P:calcium import into the mitochondrion"/>
    <property type="evidence" value="ECO:0000314"/>
    <property type="project" value="UniProtKB"/>
</dbReference>
<dbReference type="GO" id="GO:0051560">
    <property type="term" value="P:mitochondrial calcium ion homeostasis"/>
    <property type="evidence" value="ECO:0007669"/>
    <property type="project" value="InterPro"/>
</dbReference>
<dbReference type="GO" id="GO:0051289">
    <property type="term" value="P:protein homotetramerization"/>
    <property type="evidence" value="ECO:0000314"/>
    <property type="project" value="UniProtKB"/>
</dbReference>
<dbReference type="InterPro" id="IPR006769">
    <property type="entry name" value="MCU_C"/>
</dbReference>
<dbReference type="InterPro" id="IPR039055">
    <property type="entry name" value="MCU_fam"/>
</dbReference>
<dbReference type="PANTHER" id="PTHR13462">
    <property type="entry name" value="CALCIUM UNIPORTER PROTEIN, MITOCHONDRIAL"/>
    <property type="match status" value="1"/>
</dbReference>
<dbReference type="PANTHER" id="PTHR13462:SF10">
    <property type="entry name" value="CALCIUM UNIPORTER PROTEIN, MITOCHONDRIAL"/>
    <property type="match status" value="1"/>
</dbReference>
<dbReference type="Pfam" id="PF04678">
    <property type="entry name" value="MCU"/>
    <property type="match status" value="1"/>
</dbReference>
<accession>E9DVV4</accession>
<sequence>MGHVLGGTLLAANRLARPPAVVLGKPRVCCWRASPWPVIVSSALQFSSSSARHTNYTSARYEARGRSTTQRKVDDRPWHRESSGSLPKSTSPDPTGGDATKGRLLTTPTRLLKLILPIPFHPEQEYINSDETKTNKPKEDAVEPLALLVHPQQPLSYLERLIQAEIPPLLVKDREKLPEIIFRAEADYTGGNKSNDGRREESNGNGSNVASYSGLGREGPSKGDTHWVRWSGSTEIGDFIRDAARGREFSVTIEGHAEELRVAVPSFKDRTYYMRMRLRRMSQEIDQMATVKRECDLLAHKGAHALAKGGFAALAAWWGIVYYVTFHTDMGWDLVEPITYLAGLASIMGGYLWFLFISRDLSYKAAMNVTVSRRQNALYQERGFDPAKWDQLVHDANGLRREIKFAATEYGVEWDEMKDLGGEEVKEVLEEEKGGKARKREQEDEDGDGDDDHDHDHDHVSHGAELQGQDILHANEAAANVPGD</sequence>
<keyword id="KW-0002">3D-structure</keyword>
<keyword id="KW-0106">Calcium</keyword>
<keyword id="KW-0107">Calcium channel</keyword>
<keyword id="KW-0109">Calcium transport</keyword>
<keyword id="KW-0407">Ion channel</keyword>
<keyword id="KW-0406">Ion transport</keyword>
<keyword id="KW-0472">Membrane</keyword>
<keyword id="KW-0479">Metal-binding</keyword>
<keyword id="KW-0496">Mitochondrion</keyword>
<keyword id="KW-0999">Mitochondrion inner membrane</keyword>
<keyword id="KW-1185">Reference proteome</keyword>
<keyword id="KW-0809">Transit peptide</keyword>
<keyword id="KW-0812">Transmembrane</keyword>
<keyword id="KW-1133">Transmembrane helix</keyword>
<keyword id="KW-0813">Transport</keyword>
<gene>
    <name evidence="4" type="primary">Mcu</name>
    <name evidence="7" type="ORF">MAC_01752</name>
</gene>
<organism>
    <name type="scientific">Metarhizium acridum (strain CQMa 102)</name>
    <dbReference type="NCBI Taxonomy" id="655827"/>
    <lineage>
        <taxon>Eukaryota</taxon>
        <taxon>Fungi</taxon>
        <taxon>Dikarya</taxon>
        <taxon>Ascomycota</taxon>
        <taxon>Pezizomycotina</taxon>
        <taxon>Sordariomycetes</taxon>
        <taxon>Hypocreomycetidae</taxon>
        <taxon>Hypocreales</taxon>
        <taxon>Clavicipitaceae</taxon>
        <taxon>Metarhizium</taxon>
    </lineage>
</organism>
<reference key="1">
    <citation type="journal article" date="2011" name="PLoS Genet.">
        <title>Genome sequencing and comparative transcriptomics of the model entomopathogenic fungi Metarhizium anisopliae and M. acridum.</title>
        <authorList>
            <person name="Gao Q."/>
            <person name="Jin K."/>
            <person name="Ying S.-H."/>
            <person name="Zhang Y."/>
            <person name="Xiao G."/>
            <person name="Shang Y."/>
            <person name="Duan Z."/>
            <person name="Hu X."/>
            <person name="Xie X.-Q."/>
            <person name="Zhou G."/>
            <person name="Peng G."/>
            <person name="Luo Z."/>
            <person name="Huang W."/>
            <person name="Wang B."/>
            <person name="Fang W."/>
            <person name="Wang S."/>
            <person name="Zhong Y."/>
            <person name="Ma L.-J."/>
            <person name="St Leger R.J."/>
            <person name="Zhao G.-P."/>
            <person name="Pei Y."/>
            <person name="Feng M.-G."/>
            <person name="Xia Y."/>
            <person name="Wang C."/>
        </authorList>
    </citation>
    <scope>NUCLEOTIDE SEQUENCE [LARGE SCALE GENOMIC DNA]</scope>
    <source>
        <strain>CQMa 102</strain>
    </source>
</reference>
<reference evidence="8 9" key="2">
    <citation type="journal article" date="2018" name="Nature">
        <title>X-ray and cryo-EM structures of the mitochondrial calcium uniporter.</title>
        <authorList>
            <person name="Fan C."/>
            <person name="Fan M."/>
            <person name="Orlando B.J."/>
            <person name="Fastman N.M."/>
            <person name="Zhang J."/>
            <person name="Xu Y."/>
            <person name="Chambers M.G."/>
            <person name="Xu X."/>
            <person name="Perry K."/>
            <person name="Liao M."/>
            <person name="Feng L."/>
        </authorList>
    </citation>
    <scope>X-RAY CRYSTALLOGRAPHY (3.10 ANGSTROMS) OF 99-426 IN COMPLEX WITH CALCIUM</scope>
    <scope>FUNCTION</scope>
    <scope>TRANSPORTER ACTIVITY</scope>
    <scope>ACTIVITY REGULATION</scope>
    <scope>SUBUNIT</scope>
    <scope>SUBCELLULAR LOCATION</scope>
    <scope>DOMAIN</scope>
    <scope>MUTAGENESIS OF PHE-326; GLY-331; TRP-332; ASP-333; GLU-336; PRO-337; TYR-340; LEU-341; GLY-343; ILE-347; GLY-350 AND PHE-354</scope>
</reference>
<comment type="function">
    <text evidence="3">Highly selective calcium channel localized to the inner mitochondrial membrane, which mediates calcium uptake into the mitochondrial matrix (PubMed:29995856). Mitochondrial calcium homeostasis plays key roles in cellular physiology and regulates ATP production, cytoplasmic calcium signals and activation of cell death pathways (PubMed:29995856). Sufficient to operate as a pore-forming channel without the need of calcium-sensor or auxiliary subunit (PubMed:29995856).</text>
</comment>
<comment type="catalytic activity">
    <reaction evidence="3">
        <text>Ca(2+)(in) = Ca(2+)(out)</text>
        <dbReference type="Rhea" id="RHEA:29671"/>
        <dbReference type="ChEBI" id="CHEBI:29108"/>
    </reaction>
</comment>
<comment type="activity regulation">
    <text evidence="3">Inhibited by ruthenium red or its derivative Ru360.</text>
</comment>
<comment type="subunit">
    <text evidence="3">Homotetramer, assembles in a dimer or dimers configuration with two interfaces.</text>
</comment>
<comment type="interaction">
    <interactant intactId="EBI-20716319">
        <id>E9DVV4</id>
    </interactant>
    <interactant intactId="EBI-20716319">
        <id>E9DVV4</id>
        <label>Mcu</label>
    </interactant>
    <organismsDiffer>false</organismsDiffer>
    <experiments>3</experiments>
</comment>
<comment type="subcellular location">
    <subcellularLocation>
        <location evidence="3">Mitochondrion inner membrane</location>
        <topology evidence="3">Multi-pass membrane protein</topology>
    </subcellularLocation>
</comment>
<comment type="domain">
    <text evidence="3">The selectivity filter, in which calcium ions are arranged in single file, is composed of two acidic rings separated by one helical turn along the central axis of the channel pore.</text>
</comment>
<comment type="similarity">
    <text evidence="5">Belongs to the MCU (TC 1.A.77) family.</text>
</comment>
<evidence type="ECO:0000255" key="1"/>
<evidence type="ECO:0000256" key="2">
    <source>
        <dbReference type="SAM" id="MobiDB-lite"/>
    </source>
</evidence>
<evidence type="ECO:0000269" key="3">
    <source>
    </source>
</evidence>
<evidence type="ECO:0000303" key="4">
    <source>
    </source>
</evidence>
<evidence type="ECO:0000305" key="5"/>
<evidence type="ECO:0000305" key="6">
    <source>
    </source>
</evidence>
<evidence type="ECO:0000312" key="7">
    <source>
        <dbReference type="EMBL" id="EFY92151.1"/>
    </source>
</evidence>
<evidence type="ECO:0007744" key="8">
    <source>
        <dbReference type="PDB" id="6C5R"/>
    </source>
</evidence>
<evidence type="ECO:0007744" key="9">
    <source>
        <dbReference type="PDB" id="6C5W"/>
    </source>
</evidence>
<evidence type="ECO:0007829" key="10">
    <source>
        <dbReference type="PDB" id="6C5R"/>
    </source>
</evidence>
<evidence type="ECO:0007829" key="11">
    <source>
        <dbReference type="PDB" id="6C5W"/>
    </source>
</evidence>
<proteinExistence type="evidence at protein level"/>
<feature type="transit peptide" description="Mitochondrion" evidence="1">
    <location>
        <begin position="1"/>
        <end position="33"/>
    </location>
</feature>
<feature type="chain" id="PRO_0000460495" description="Calcium uniporter protein, mitochondrial" evidence="1">
    <location>
        <begin position="34"/>
        <end position="484"/>
    </location>
</feature>
<feature type="topological domain" description="Mitochondrial matrix" evidence="6">
    <location>
        <begin position="34"/>
        <end position="304"/>
    </location>
</feature>
<feature type="transmembrane region" description="Helical" evidence="3 8">
    <location>
        <begin position="305"/>
        <end position="326"/>
    </location>
</feature>
<feature type="topological domain" description="Mitochondrial intermembrane" evidence="6">
    <location>
        <begin position="327"/>
        <end position="334"/>
    </location>
</feature>
<feature type="transmembrane region" description="Helical" evidence="3 8">
    <location>
        <begin position="335"/>
        <end position="355"/>
    </location>
</feature>
<feature type="topological domain" description="Mitochondrial matrix" evidence="6">
    <location>
        <begin position="356"/>
        <end position="484"/>
    </location>
</feature>
<feature type="region of interest" description="Disordered" evidence="2">
    <location>
        <begin position="59"/>
        <end position="104"/>
    </location>
</feature>
<feature type="region of interest" description="Disordered" evidence="2">
    <location>
        <begin position="188"/>
        <end position="227"/>
    </location>
</feature>
<feature type="region of interest" description="Disordered" evidence="2">
    <location>
        <begin position="426"/>
        <end position="484"/>
    </location>
</feature>
<feature type="short sequence motif" description="Selectivity filter" evidence="3">
    <location>
        <begin position="332"/>
        <end position="340"/>
    </location>
</feature>
<feature type="compositionally biased region" description="Basic and acidic residues" evidence="2">
    <location>
        <begin position="61"/>
        <end position="82"/>
    </location>
</feature>
<feature type="compositionally biased region" description="Polar residues" evidence="2">
    <location>
        <begin position="83"/>
        <end position="93"/>
    </location>
</feature>
<feature type="compositionally biased region" description="Basic and acidic residues" evidence="2">
    <location>
        <begin position="426"/>
        <end position="435"/>
    </location>
</feature>
<feature type="compositionally biased region" description="Basic and acidic residues" evidence="2">
    <location>
        <begin position="452"/>
        <end position="462"/>
    </location>
</feature>
<feature type="binding site" evidence="3 9">
    <location>
        <position position="336"/>
    </location>
    <ligand>
        <name>Ca(2+)</name>
        <dbReference type="ChEBI" id="CHEBI:29108"/>
    </ligand>
</feature>
<feature type="mutagenesis site" description="Strongly reduced calcium channel activity." evidence="3">
    <original>F</original>
    <variation>A</variation>
    <location>
        <position position="326"/>
    </location>
</feature>
<feature type="mutagenesis site" description="Strongly reduced calcium channel activity." evidence="3">
    <original>G</original>
    <variation>L</variation>
    <location>
        <position position="331"/>
    </location>
</feature>
<feature type="mutagenesis site" description="Abolished calcium channel activity." evidence="3">
    <original>W</original>
    <variation>A</variation>
    <location>
        <position position="332"/>
    </location>
</feature>
<feature type="mutagenesis site" description="Reduced sensitivitiy to ruthenium red derivative Ru360." evidence="3">
    <original>D</original>
    <variation>A</variation>
    <location>
        <position position="333"/>
    </location>
</feature>
<feature type="mutagenesis site" description="Abolished calcium channel activity." evidence="3">
    <original>E</original>
    <variation>A</variation>
    <location>
        <position position="336"/>
    </location>
</feature>
<feature type="mutagenesis site" description="Abolished calcium channel activity." evidence="3">
    <original>P</original>
    <variation>A</variation>
    <location>
        <position position="337"/>
    </location>
</feature>
<feature type="mutagenesis site" description="Abolished calcium channel activity." evidence="3">
    <original>Y</original>
    <variation>A</variation>
    <location>
        <position position="340"/>
    </location>
</feature>
<feature type="mutagenesis site" description="Strongly reduced calcium channel activity." evidence="3">
    <original>L</original>
    <variation>A</variation>
    <location>
        <position position="341"/>
    </location>
</feature>
<feature type="mutagenesis site" description="Strongly reduced calcium channel activity." evidence="3">
    <original>G</original>
    <variation>L</variation>
    <location>
        <position position="343"/>
    </location>
</feature>
<feature type="mutagenesis site" description="Strongly reduced calcium channel activity." evidence="3">
    <original>I</original>
    <variation>A</variation>
    <location>
        <position position="347"/>
    </location>
</feature>
<feature type="mutagenesis site" description="Strongly reduced calcium channel activity." evidence="3">
    <original>G</original>
    <variation>L</variation>
    <location>
        <position position="350"/>
    </location>
</feature>
<feature type="mutagenesis site" description="Strongly reduced calcium channel activity." evidence="3">
    <original>F</original>
    <variation>A</variation>
    <location>
        <position position="354"/>
    </location>
</feature>
<feature type="strand" evidence="10">
    <location>
        <begin position="104"/>
        <end position="106"/>
    </location>
</feature>
<feature type="strand" evidence="10">
    <location>
        <begin position="108"/>
        <end position="110"/>
    </location>
</feature>
<feature type="strand" evidence="10">
    <location>
        <begin position="112"/>
        <end position="114"/>
    </location>
</feature>
<feature type="strand" evidence="10">
    <location>
        <begin position="143"/>
        <end position="145"/>
    </location>
</feature>
<feature type="strand" evidence="10">
    <location>
        <begin position="147"/>
        <end position="149"/>
    </location>
</feature>
<feature type="helix" evidence="10">
    <location>
        <begin position="155"/>
        <end position="164"/>
    </location>
</feature>
<feature type="strand" evidence="10">
    <location>
        <begin position="169"/>
        <end position="171"/>
    </location>
</feature>
<feature type="strand" evidence="10">
    <location>
        <begin position="174"/>
        <end position="176"/>
    </location>
</feature>
<feature type="strand" evidence="10">
    <location>
        <begin position="180"/>
        <end position="184"/>
    </location>
</feature>
<feature type="helix" evidence="11">
    <location>
        <begin position="216"/>
        <end position="218"/>
    </location>
</feature>
<feature type="helix" evidence="10">
    <location>
        <begin position="236"/>
        <end position="243"/>
    </location>
</feature>
<feature type="turn" evidence="10">
    <location>
        <begin position="244"/>
        <end position="247"/>
    </location>
</feature>
<feature type="strand" evidence="10">
    <location>
        <begin position="248"/>
        <end position="255"/>
    </location>
</feature>
<feature type="strand" evidence="10">
    <location>
        <begin position="260"/>
        <end position="263"/>
    </location>
</feature>
<feature type="helix" evidence="10">
    <location>
        <begin position="267"/>
        <end position="294"/>
    </location>
</feature>
<feature type="turn" evidence="11">
    <location>
        <begin position="296"/>
        <end position="304"/>
    </location>
</feature>
<feature type="helix" evidence="11">
    <location>
        <begin position="305"/>
        <end position="326"/>
    </location>
</feature>
<feature type="strand" evidence="11">
    <location>
        <begin position="327"/>
        <end position="329"/>
    </location>
</feature>
<feature type="helix" evidence="11">
    <location>
        <begin position="332"/>
        <end position="353"/>
    </location>
</feature>
<feature type="turn" evidence="11">
    <location>
        <begin position="354"/>
        <end position="357"/>
    </location>
</feature>
<feature type="helix" evidence="11">
    <location>
        <begin position="363"/>
        <end position="373"/>
    </location>
</feature>
<feature type="strand" evidence="11">
    <location>
        <begin position="381"/>
        <end position="383"/>
    </location>
</feature>
<feature type="helix" evidence="10">
    <location>
        <begin position="389"/>
        <end position="410"/>
    </location>
</feature>
<name>MCU_METAQ</name>